<reference key="1">
    <citation type="journal article" date="2007" name="Genome Biol.">
        <title>Characterization and modeling of the Haemophilus influenzae core and supragenomes based on the complete genomic sequences of Rd and 12 clinical nontypeable strains.</title>
        <authorList>
            <person name="Hogg J.S."/>
            <person name="Hu F.Z."/>
            <person name="Janto B."/>
            <person name="Boissy R."/>
            <person name="Hayes J."/>
            <person name="Keefe R."/>
            <person name="Post J.C."/>
            <person name="Ehrlich G.D."/>
        </authorList>
    </citation>
    <scope>NUCLEOTIDE SEQUENCE [LARGE SCALE GENOMIC DNA]</scope>
    <source>
        <strain>PittGG</strain>
    </source>
</reference>
<keyword id="KW-0520">NAD</keyword>
<keyword id="KW-0560">Oxidoreductase</keyword>
<keyword id="KW-0816">Tricarboxylic acid cycle</keyword>
<organism>
    <name type="scientific">Haemophilus influenzae (strain PittGG)</name>
    <dbReference type="NCBI Taxonomy" id="374931"/>
    <lineage>
        <taxon>Bacteria</taxon>
        <taxon>Pseudomonadati</taxon>
        <taxon>Pseudomonadota</taxon>
        <taxon>Gammaproteobacteria</taxon>
        <taxon>Pasteurellales</taxon>
        <taxon>Pasteurellaceae</taxon>
        <taxon>Haemophilus</taxon>
    </lineage>
</organism>
<protein>
    <recommendedName>
        <fullName evidence="1">Malate dehydrogenase</fullName>
        <ecNumber evidence="1">1.1.1.37</ecNumber>
    </recommendedName>
</protein>
<evidence type="ECO:0000255" key="1">
    <source>
        <dbReference type="HAMAP-Rule" id="MF_01516"/>
    </source>
</evidence>
<accession>A5UIX3</accession>
<dbReference type="EC" id="1.1.1.37" evidence="1"/>
<dbReference type="EMBL" id="CP000672">
    <property type="protein sequence ID" value="ABR00729.1"/>
    <property type="molecule type" value="Genomic_DNA"/>
</dbReference>
<dbReference type="SMR" id="A5UIX3"/>
<dbReference type="KEGG" id="hiq:CGSHiGG_09775"/>
<dbReference type="HOGENOM" id="CLU_047181_0_1_6"/>
<dbReference type="Proteomes" id="UP000001990">
    <property type="component" value="Chromosome"/>
</dbReference>
<dbReference type="GO" id="GO:0005737">
    <property type="term" value="C:cytoplasm"/>
    <property type="evidence" value="ECO:0007669"/>
    <property type="project" value="TreeGrafter"/>
</dbReference>
<dbReference type="GO" id="GO:0030060">
    <property type="term" value="F:L-malate dehydrogenase (NAD+) activity"/>
    <property type="evidence" value="ECO:0007669"/>
    <property type="project" value="UniProtKB-UniRule"/>
</dbReference>
<dbReference type="GO" id="GO:0006108">
    <property type="term" value="P:malate metabolic process"/>
    <property type="evidence" value="ECO:0007669"/>
    <property type="project" value="InterPro"/>
</dbReference>
<dbReference type="GO" id="GO:0006099">
    <property type="term" value="P:tricarboxylic acid cycle"/>
    <property type="evidence" value="ECO:0007669"/>
    <property type="project" value="UniProtKB-UniRule"/>
</dbReference>
<dbReference type="CDD" id="cd01337">
    <property type="entry name" value="MDH_glyoxysomal_mitochondrial"/>
    <property type="match status" value="1"/>
</dbReference>
<dbReference type="FunFam" id="3.40.50.720:FF:000017">
    <property type="entry name" value="Malate dehydrogenase"/>
    <property type="match status" value="1"/>
</dbReference>
<dbReference type="FunFam" id="3.90.110.10:FF:000001">
    <property type="entry name" value="Malate dehydrogenase"/>
    <property type="match status" value="1"/>
</dbReference>
<dbReference type="Gene3D" id="3.90.110.10">
    <property type="entry name" value="Lactate dehydrogenase/glycoside hydrolase, family 4, C-terminal"/>
    <property type="match status" value="1"/>
</dbReference>
<dbReference type="Gene3D" id="3.40.50.720">
    <property type="entry name" value="NAD(P)-binding Rossmann-like Domain"/>
    <property type="match status" value="1"/>
</dbReference>
<dbReference type="HAMAP" id="MF_01516">
    <property type="entry name" value="Malate_dehydrog_1"/>
    <property type="match status" value="1"/>
</dbReference>
<dbReference type="InterPro" id="IPR001557">
    <property type="entry name" value="L-lactate/malate_DH"/>
</dbReference>
<dbReference type="InterPro" id="IPR022383">
    <property type="entry name" value="Lactate/malate_DH_C"/>
</dbReference>
<dbReference type="InterPro" id="IPR001236">
    <property type="entry name" value="Lactate/malate_DH_N"/>
</dbReference>
<dbReference type="InterPro" id="IPR015955">
    <property type="entry name" value="Lactate_DH/Glyco_Ohase_4_C"/>
</dbReference>
<dbReference type="InterPro" id="IPR001252">
    <property type="entry name" value="Malate_DH_AS"/>
</dbReference>
<dbReference type="InterPro" id="IPR010097">
    <property type="entry name" value="Malate_DH_type1"/>
</dbReference>
<dbReference type="InterPro" id="IPR023958">
    <property type="entry name" value="Malate_DH_type1_bac"/>
</dbReference>
<dbReference type="InterPro" id="IPR036291">
    <property type="entry name" value="NAD(P)-bd_dom_sf"/>
</dbReference>
<dbReference type="NCBIfam" id="TIGR01772">
    <property type="entry name" value="MDH_euk_gproteo"/>
    <property type="match status" value="1"/>
</dbReference>
<dbReference type="PANTHER" id="PTHR11540">
    <property type="entry name" value="MALATE AND LACTATE DEHYDROGENASE"/>
    <property type="match status" value="1"/>
</dbReference>
<dbReference type="PANTHER" id="PTHR11540:SF16">
    <property type="entry name" value="MALATE DEHYDROGENASE, MITOCHONDRIAL"/>
    <property type="match status" value="1"/>
</dbReference>
<dbReference type="Pfam" id="PF02866">
    <property type="entry name" value="Ldh_1_C"/>
    <property type="match status" value="1"/>
</dbReference>
<dbReference type="Pfam" id="PF00056">
    <property type="entry name" value="Ldh_1_N"/>
    <property type="match status" value="1"/>
</dbReference>
<dbReference type="PIRSF" id="PIRSF000102">
    <property type="entry name" value="Lac_mal_DH"/>
    <property type="match status" value="1"/>
</dbReference>
<dbReference type="SUPFAM" id="SSF56327">
    <property type="entry name" value="LDH C-terminal domain-like"/>
    <property type="match status" value="1"/>
</dbReference>
<dbReference type="SUPFAM" id="SSF51735">
    <property type="entry name" value="NAD(P)-binding Rossmann-fold domains"/>
    <property type="match status" value="1"/>
</dbReference>
<dbReference type="PROSITE" id="PS00068">
    <property type="entry name" value="MDH"/>
    <property type="match status" value="1"/>
</dbReference>
<proteinExistence type="inferred from homology"/>
<gene>
    <name evidence="1" type="primary">mdh</name>
    <name type="ordered locus">CGSHiGG_09775</name>
</gene>
<name>MDH_HAEIG</name>
<feature type="chain" id="PRO_1000068590" description="Malate dehydrogenase">
    <location>
        <begin position="1"/>
        <end position="311"/>
    </location>
</feature>
<feature type="active site" description="Proton acceptor" evidence="1">
    <location>
        <position position="177"/>
    </location>
</feature>
<feature type="binding site" evidence="1">
    <location>
        <begin position="7"/>
        <end position="13"/>
    </location>
    <ligand>
        <name>NAD(+)</name>
        <dbReference type="ChEBI" id="CHEBI:57540"/>
    </ligand>
</feature>
<feature type="binding site" evidence="1">
    <location>
        <position position="34"/>
    </location>
    <ligand>
        <name>NAD(+)</name>
        <dbReference type="ChEBI" id="CHEBI:57540"/>
    </ligand>
</feature>
<feature type="binding site" evidence="1">
    <location>
        <position position="81"/>
    </location>
    <ligand>
        <name>substrate</name>
    </ligand>
</feature>
<feature type="binding site" evidence="1">
    <location>
        <position position="87"/>
    </location>
    <ligand>
        <name>substrate</name>
    </ligand>
</feature>
<feature type="binding site" evidence="1">
    <location>
        <position position="94"/>
    </location>
    <ligand>
        <name>NAD(+)</name>
        <dbReference type="ChEBI" id="CHEBI:57540"/>
    </ligand>
</feature>
<feature type="binding site" evidence="1">
    <location>
        <begin position="117"/>
        <end position="119"/>
    </location>
    <ligand>
        <name>NAD(+)</name>
        <dbReference type="ChEBI" id="CHEBI:57540"/>
    </ligand>
</feature>
<feature type="binding site" evidence="1">
    <location>
        <position position="119"/>
    </location>
    <ligand>
        <name>substrate</name>
    </ligand>
</feature>
<feature type="binding site" evidence="1">
    <location>
        <position position="153"/>
    </location>
    <ligand>
        <name>substrate</name>
    </ligand>
</feature>
<feature type="binding site" evidence="1">
    <location>
        <position position="227"/>
    </location>
    <ligand>
        <name>NAD(+)</name>
        <dbReference type="ChEBI" id="CHEBI:57540"/>
    </ligand>
</feature>
<sequence length="311" mass="32541">MKVAVLGAAGGIGQALALLLKLQLPAGTDLALYDIAPVTPGVAVDVSHIPTAVNVKGFSGEDPTPALEGADVVLISAGVARKPGMDRSDLFNINAGIVRGLIEKVAITCPKACVGIITNPVNTTVAIAAEVLKKAGVYDKRKLFGVTTLDVLRSETFVAELKGLNVSRTSVPVIGGHSGVTILPLLSQVQYAKWNEEEIEPLTKRIQNAGTEVVNAKAGGGSATLSMAQAAARFARSLVKGLSGETVVECTYVEGDGKYARFFSQPVRLGKEGVEEILPIGPLSNFEQQALENMLPTLRADIELGEKFING</sequence>
<comment type="function">
    <text evidence="1">Catalyzes the reversible oxidation of malate to oxaloacetate.</text>
</comment>
<comment type="catalytic activity">
    <reaction evidence="1">
        <text>(S)-malate + NAD(+) = oxaloacetate + NADH + H(+)</text>
        <dbReference type="Rhea" id="RHEA:21432"/>
        <dbReference type="ChEBI" id="CHEBI:15378"/>
        <dbReference type="ChEBI" id="CHEBI:15589"/>
        <dbReference type="ChEBI" id="CHEBI:16452"/>
        <dbReference type="ChEBI" id="CHEBI:57540"/>
        <dbReference type="ChEBI" id="CHEBI:57945"/>
        <dbReference type="EC" id="1.1.1.37"/>
    </reaction>
</comment>
<comment type="subunit">
    <text evidence="1">Homodimer.</text>
</comment>
<comment type="similarity">
    <text evidence="1">Belongs to the LDH/MDH superfamily. MDH type 1 family.</text>
</comment>